<dbReference type="EC" id="3.1.3.11" evidence="1"/>
<dbReference type="EMBL" id="AE005174">
    <property type="protein sequence ID" value="AAG59429.1"/>
    <property type="molecule type" value="Genomic_DNA"/>
</dbReference>
<dbReference type="EMBL" id="BA000007">
    <property type="protein sequence ID" value="BAB38632.1"/>
    <property type="molecule type" value="Genomic_DNA"/>
</dbReference>
<dbReference type="PIR" id="A86121">
    <property type="entry name" value="A86121"/>
</dbReference>
<dbReference type="PIR" id="A98280">
    <property type="entry name" value="A98280"/>
</dbReference>
<dbReference type="RefSeq" id="NP_313236.1">
    <property type="nucleotide sequence ID" value="NC_002695.1"/>
</dbReference>
<dbReference type="RefSeq" id="WP_000853749.1">
    <property type="nucleotide sequence ID" value="NZ_VOAI01000023.1"/>
</dbReference>
<dbReference type="SMR" id="Q8XCF0"/>
<dbReference type="STRING" id="155864.Z5842"/>
<dbReference type="GeneID" id="913877"/>
<dbReference type="KEGG" id="ece:Z5842"/>
<dbReference type="KEGG" id="ecs:ECs_5209"/>
<dbReference type="PATRIC" id="fig|386585.9.peg.5445"/>
<dbReference type="eggNOG" id="COG0158">
    <property type="taxonomic scope" value="Bacteria"/>
</dbReference>
<dbReference type="HOGENOM" id="CLU_039977_2_2_6"/>
<dbReference type="OMA" id="YIPENCP"/>
<dbReference type="UniPathway" id="UPA00138"/>
<dbReference type="Proteomes" id="UP000000558">
    <property type="component" value="Chromosome"/>
</dbReference>
<dbReference type="Proteomes" id="UP000002519">
    <property type="component" value="Chromosome"/>
</dbReference>
<dbReference type="GO" id="GO:0005829">
    <property type="term" value="C:cytosol"/>
    <property type="evidence" value="ECO:0007669"/>
    <property type="project" value="TreeGrafter"/>
</dbReference>
<dbReference type="GO" id="GO:0042132">
    <property type="term" value="F:fructose 1,6-bisphosphate 1-phosphatase activity"/>
    <property type="evidence" value="ECO:0007669"/>
    <property type="project" value="UniProtKB-UniRule"/>
</dbReference>
<dbReference type="GO" id="GO:0000287">
    <property type="term" value="F:magnesium ion binding"/>
    <property type="evidence" value="ECO:0007669"/>
    <property type="project" value="UniProtKB-UniRule"/>
</dbReference>
<dbReference type="GO" id="GO:0030388">
    <property type="term" value="P:fructose 1,6-bisphosphate metabolic process"/>
    <property type="evidence" value="ECO:0007669"/>
    <property type="project" value="TreeGrafter"/>
</dbReference>
<dbReference type="GO" id="GO:0006002">
    <property type="term" value="P:fructose 6-phosphate metabolic process"/>
    <property type="evidence" value="ECO:0007669"/>
    <property type="project" value="TreeGrafter"/>
</dbReference>
<dbReference type="GO" id="GO:0006000">
    <property type="term" value="P:fructose metabolic process"/>
    <property type="evidence" value="ECO:0007669"/>
    <property type="project" value="TreeGrafter"/>
</dbReference>
<dbReference type="GO" id="GO:0006094">
    <property type="term" value="P:gluconeogenesis"/>
    <property type="evidence" value="ECO:0007669"/>
    <property type="project" value="UniProtKB-UniRule"/>
</dbReference>
<dbReference type="GO" id="GO:0005986">
    <property type="term" value="P:sucrose biosynthetic process"/>
    <property type="evidence" value="ECO:0007669"/>
    <property type="project" value="TreeGrafter"/>
</dbReference>
<dbReference type="CDD" id="cd00354">
    <property type="entry name" value="FBPase"/>
    <property type="match status" value="1"/>
</dbReference>
<dbReference type="FunFam" id="3.30.540.10:FF:000002">
    <property type="entry name" value="Fructose-1,6-bisphosphatase class 1"/>
    <property type="match status" value="1"/>
</dbReference>
<dbReference type="FunFam" id="3.40.190.80:FF:000001">
    <property type="entry name" value="Fructose-1,6-bisphosphatase class 1"/>
    <property type="match status" value="1"/>
</dbReference>
<dbReference type="Gene3D" id="3.40.190.80">
    <property type="match status" value="1"/>
</dbReference>
<dbReference type="Gene3D" id="3.30.540.10">
    <property type="entry name" value="Fructose-1,6-Bisphosphatase, subunit A, domain 1"/>
    <property type="match status" value="1"/>
</dbReference>
<dbReference type="HAMAP" id="MF_01855">
    <property type="entry name" value="FBPase_class1"/>
    <property type="match status" value="1"/>
</dbReference>
<dbReference type="InterPro" id="IPR044015">
    <property type="entry name" value="FBPase_C_dom"/>
</dbReference>
<dbReference type="InterPro" id="IPR000146">
    <property type="entry name" value="FBPase_class-1"/>
</dbReference>
<dbReference type="InterPro" id="IPR033391">
    <property type="entry name" value="FBPase_N"/>
</dbReference>
<dbReference type="InterPro" id="IPR028343">
    <property type="entry name" value="FBPtase"/>
</dbReference>
<dbReference type="InterPro" id="IPR020548">
    <property type="entry name" value="Fructose_bisphosphatase_AS"/>
</dbReference>
<dbReference type="NCBIfam" id="NF006778">
    <property type="entry name" value="PRK09293.1-1"/>
    <property type="match status" value="1"/>
</dbReference>
<dbReference type="PANTHER" id="PTHR11556">
    <property type="entry name" value="FRUCTOSE-1,6-BISPHOSPHATASE-RELATED"/>
    <property type="match status" value="1"/>
</dbReference>
<dbReference type="PANTHER" id="PTHR11556:SF35">
    <property type="entry name" value="SEDOHEPTULOSE-1,7-BISPHOSPHATASE, CHLOROPLASTIC"/>
    <property type="match status" value="1"/>
</dbReference>
<dbReference type="Pfam" id="PF00316">
    <property type="entry name" value="FBPase"/>
    <property type="match status" value="1"/>
</dbReference>
<dbReference type="Pfam" id="PF18913">
    <property type="entry name" value="FBPase_C"/>
    <property type="match status" value="1"/>
</dbReference>
<dbReference type="PIRSF" id="PIRSF500210">
    <property type="entry name" value="FBPtase"/>
    <property type="match status" value="1"/>
</dbReference>
<dbReference type="PIRSF" id="PIRSF000904">
    <property type="entry name" value="FBPtase_SBPase"/>
    <property type="match status" value="1"/>
</dbReference>
<dbReference type="PRINTS" id="PR00115">
    <property type="entry name" value="F16BPHPHTASE"/>
</dbReference>
<dbReference type="SUPFAM" id="SSF56655">
    <property type="entry name" value="Carbohydrate phosphatase"/>
    <property type="match status" value="1"/>
</dbReference>
<dbReference type="PROSITE" id="PS00124">
    <property type="entry name" value="FBPASE"/>
    <property type="match status" value="1"/>
</dbReference>
<reference key="1">
    <citation type="journal article" date="2001" name="Nature">
        <title>Genome sequence of enterohaemorrhagic Escherichia coli O157:H7.</title>
        <authorList>
            <person name="Perna N.T."/>
            <person name="Plunkett G. III"/>
            <person name="Burland V."/>
            <person name="Mau B."/>
            <person name="Glasner J.D."/>
            <person name="Rose D.J."/>
            <person name="Mayhew G.F."/>
            <person name="Evans P.S."/>
            <person name="Gregor J."/>
            <person name="Kirkpatrick H.A."/>
            <person name="Posfai G."/>
            <person name="Hackett J."/>
            <person name="Klink S."/>
            <person name="Boutin A."/>
            <person name="Shao Y."/>
            <person name="Miller L."/>
            <person name="Grotbeck E.J."/>
            <person name="Davis N.W."/>
            <person name="Lim A."/>
            <person name="Dimalanta E.T."/>
            <person name="Potamousis K."/>
            <person name="Apodaca J."/>
            <person name="Anantharaman T.S."/>
            <person name="Lin J."/>
            <person name="Yen G."/>
            <person name="Schwartz D.C."/>
            <person name="Welch R.A."/>
            <person name="Blattner F.R."/>
        </authorList>
    </citation>
    <scope>NUCLEOTIDE SEQUENCE [LARGE SCALE GENOMIC DNA]</scope>
    <source>
        <strain>O157:H7 / EDL933 / ATCC 700927 / EHEC</strain>
    </source>
</reference>
<reference key="2">
    <citation type="journal article" date="2001" name="DNA Res.">
        <title>Complete genome sequence of enterohemorrhagic Escherichia coli O157:H7 and genomic comparison with a laboratory strain K-12.</title>
        <authorList>
            <person name="Hayashi T."/>
            <person name="Makino K."/>
            <person name="Ohnishi M."/>
            <person name="Kurokawa K."/>
            <person name="Ishii K."/>
            <person name="Yokoyama K."/>
            <person name="Han C.-G."/>
            <person name="Ohtsubo E."/>
            <person name="Nakayama K."/>
            <person name="Murata T."/>
            <person name="Tanaka M."/>
            <person name="Tobe T."/>
            <person name="Iida T."/>
            <person name="Takami H."/>
            <person name="Honda T."/>
            <person name="Sasakawa C."/>
            <person name="Ogasawara N."/>
            <person name="Yasunaga T."/>
            <person name="Kuhara S."/>
            <person name="Shiba T."/>
            <person name="Hattori M."/>
            <person name="Shinagawa H."/>
        </authorList>
    </citation>
    <scope>NUCLEOTIDE SEQUENCE [LARGE SCALE GENOMIC DNA]</scope>
    <source>
        <strain>O157:H7 / Sakai / RIMD 0509952 / EHEC</strain>
    </source>
</reference>
<comment type="catalytic activity">
    <reaction evidence="1">
        <text>beta-D-fructose 1,6-bisphosphate + H2O = beta-D-fructose 6-phosphate + phosphate</text>
        <dbReference type="Rhea" id="RHEA:11064"/>
        <dbReference type="ChEBI" id="CHEBI:15377"/>
        <dbReference type="ChEBI" id="CHEBI:32966"/>
        <dbReference type="ChEBI" id="CHEBI:43474"/>
        <dbReference type="ChEBI" id="CHEBI:57634"/>
        <dbReference type="EC" id="3.1.3.11"/>
    </reaction>
</comment>
<comment type="cofactor">
    <cofactor evidence="1">
        <name>Mg(2+)</name>
        <dbReference type="ChEBI" id="CHEBI:18420"/>
    </cofactor>
    <text evidence="1">Binds 2 magnesium ions per subunit.</text>
</comment>
<comment type="pathway">
    <text evidence="1">Carbohydrate biosynthesis; gluconeogenesis.</text>
</comment>
<comment type="subunit">
    <text evidence="1">Homotetramer.</text>
</comment>
<comment type="subcellular location">
    <subcellularLocation>
        <location evidence="1">Cytoplasm</location>
    </subcellularLocation>
</comment>
<comment type="similarity">
    <text evidence="1">Belongs to the FBPase class 1 family.</text>
</comment>
<evidence type="ECO:0000255" key="1">
    <source>
        <dbReference type="HAMAP-Rule" id="MF_01855"/>
    </source>
</evidence>
<gene>
    <name evidence="1" type="primary">fbp</name>
    <name type="ordered locus">Z5842</name>
    <name type="ordered locus">ECs5209</name>
</gene>
<name>F16PA_ECO57</name>
<keyword id="KW-0119">Carbohydrate metabolism</keyword>
<keyword id="KW-0963">Cytoplasm</keyword>
<keyword id="KW-0378">Hydrolase</keyword>
<keyword id="KW-0460">Magnesium</keyword>
<keyword id="KW-0479">Metal-binding</keyword>
<keyword id="KW-1185">Reference proteome</keyword>
<organism>
    <name type="scientific">Escherichia coli O157:H7</name>
    <dbReference type="NCBI Taxonomy" id="83334"/>
    <lineage>
        <taxon>Bacteria</taxon>
        <taxon>Pseudomonadati</taxon>
        <taxon>Pseudomonadota</taxon>
        <taxon>Gammaproteobacteria</taxon>
        <taxon>Enterobacterales</taxon>
        <taxon>Enterobacteriaceae</taxon>
        <taxon>Escherichia</taxon>
    </lineage>
</organism>
<feature type="chain" id="PRO_0000364550" description="Fructose-1,6-bisphosphatase class 1">
    <location>
        <begin position="1"/>
        <end position="332"/>
    </location>
</feature>
<feature type="binding site" evidence="1">
    <location>
        <position position="89"/>
    </location>
    <ligand>
        <name>Mg(2+)</name>
        <dbReference type="ChEBI" id="CHEBI:18420"/>
        <label>1</label>
    </ligand>
</feature>
<feature type="binding site" evidence="1">
    <location>
        <position position="110"/>
    </location>
    <ligand>
        <name>Mg(2+)</name>
        <dbReference type="ChEBI" id="CHEBI:18420"/>
        <label>1</label>
    </ligand>
</feature>
<feature type="binding site" evidence="1">
    <location>
        <position position="110"/>
    </location>
    <ligand>
        <name>Mg(2+)</name>
        <dbReference type="ChEBI" id="CHEBI:18420"/>
        <label>2</label>
    </ligand>
</feature>
<feature type="binding site" evidence="1">
    <location>
        <position position="112"/>
    </location>
    <ligand>
        <name>Mg(2+)</name>
        <dbReference type="ChEBI" id="CHEBI:18420"/>
        <label>1</label>
    </ligand>
</feature>
<feature type="binding site" evidence="1">
    <location>
        <begin position="113"/>
        <end position="116"/>
    </location>
    <ligand>
        <name>substrate</name>
    </ligand>
</feature>
<feature type="binding site" evidence="1">
    <location>
        <position position="113"/>
    </location>
    <ligand>
        <name>Mg(2+)</name>
        <dbReference type="ChEBI" id="CHEBI:18420"/>
        <label>2</label>
    </ligand>
</feature>
<feature type="binding site" evidence="1">
    <location>
        <position position="206"/>
    </location>
    <ligand>
        <name>substrate</name>
    </ligand>
</feature>
<feature type="binding site" evidence="1">
    <location>
        <position position="239"/>
    </location>
    <ligand>
        <name>substrate</name>
    </ligand>
</feature>
<feature type="binding site" evidence="1">
    <location>
        <begin position="257"/>
        <end position="259"/>
    </location>
    <ligand>
        <name>substrate</name>
    </ligand>
</feature>
<feature type="binding site" evidence="1">
    <location>
        <position position="269"/>
    </location>
    <ligand>
        <name>substrate</name>
    </ligand>
</feature>
<feature type="binding site" evidence="1">
    <location>
        <position position="275"/>
    </location>
    <ligand>
        <name>Mg(2+)</name>
        <dbReference type="ChEBI" id="CHEBI:18420"/>
        <label>2</label>
    </ligand>
</feature>
<accession>Q8XCF0</accession>
<accession>Q7A8S5</accession>
<protein>
    <recommendedName>
        <fullName evidence="1">Fructose-1,6-bisphosphatase class 1</fullName>
        <shortName evidence="1">FBPase class 1</shortName>
        <ecNumber evidence="1">3.1.3.11</ecNumber>
    </recommendedName>
    <alternativeName>
        <fullName evidence="1">D-fructose-1,6-bisphosphate 1-phosphohydrolase class 1</fullName>
    </alternativeName>
</protein>
<proteinExistence type="inferred from homology"/>
<sequence>MKTLGEFIVEKQHEFSHATGELTALLSAIKLGAKIIHRDINKAGLVDILGASGAENVQGEVQQKLDLFANEKLKAALKARDIVAGIASEEEDEIVVFEGCEHAKYVVLMDPLDGSSNIDVNVSVGTIFSIYRRVTPVGTPVTEEDFLQPGNKQVAAGYVVYGSSTMLVYSTGCGVHAFTYDPSLGVFCLCQERMRFPEKGKTYSINEGNYIKFPNGVKKYIKFCQEEDKSTNRPYTSRYIGSLVADFHRNLLKGGIYLYPSTASHPDGKLRLLYECNPMAFLAEQAGGKASDGKERILDIIPETLHQRRSFFVGNDHMVEDVERFICEFPDA</sequence>